<proteinExistence type="inferred from homology"/>
<gene>
    <name evidence="1" type="primary">aroA</name>
    <name type="ordered locus">jhp_0980</name>
</gene>
<sequence>MIELDINASDKSLSHRAVIFSLLAQKPCFVRNFLMGEDCLSSLEIAQNLGAKVENTAKNSFKITPPTTIKEPNKILNCNNSGTSMRLYSGLLSAQKGLFVLSGDNSLNARPMKRIIEPLKAFGAKILGREDNHFAPLAIVGGPLKACDYESPIASAQVKSAFILSALQAQGISAYKESELSRNHTEIMLKSLGANIQNQDGVLKISPLEKPLESFDFTIANDPSSAFFLALACAITPKSRLLLKNVLLNPTRIEAFEVLKKMGAHIEYVIQSKDLEVIGDIYIEHAPLKAISIDQNIASLIDEIPALSIAMLFAKGKSMVRNAKDLRAKESDRIKAVVSNFKALGIECEEFEDGFYIEGLGDASQLKQHFSKIKPPIIKSFNDHRIAMSFAVLTLALPLEIDNLECANISFPTFQLWLNLFKKRSLNGN</sequence>
<reference key="1">
    <citation type="journal article" date="1999" name="Nature">
        <title>Genomic sequence comparison of two unrelated isolates of the human gastric pathogen Helicobacter pylori.</title>
        <authorList>
            <person name="Alm R.A."/>
            <person name="Ling L.-S.L."/>
            <person name="Moir D.T."/>
            <person name="King B.L."/>
            <person name="Brown E.D."/>
            <person name="Doig P.C."/>
            <person name="Smith D.R."/>
            <person name="Noonan B."/>
            <person name="Guild B.C."/>
            <person name="deJonge B.L."/>
            <person name="Carmel G."/>
            <person name="Tummino P.J."/>
            <person name="Caruso A."/>
            <person name="Uria-Nickelsen M."/>
            <person name="Mills D.M."/>
            <person name="Ives C."/>
            <person name="Gibson R."/>
            <person name="Merberg D."/>
            <person name="Mills S.D."/>
            <person name="Jiang Q."/>
            <person name="Taylor D.E."/>
            <person name="Vovis G.F."/>
            <person name="Trust T.J."/>
        </authorList>
    </citation>
    <scope>NUCLEOTIDE SEQUENCE [LARGE SCALE GENOMIC DNA]</scope>
    <source>
        <strain>J99 / ATCC 700824</strain>
    </source>
</reference>
<name>AROA_HELPJ</name>
<organism>
    <name type="scientific">Helicobacter pylori (strain J99 / ATCC 700824)</name>
    <name type="common">Campylobacter pylori J99</name>
    <dbReference type="NCBI Taxonomy" id="85963"/>
    <lineage>
        <taxon>Bacteria</taxon>
        <taxon>Pseudomonadati</taxon>
        <taxon>Campylobacterota</taxon>
        <taxon>Epsilonproteobacteria</taxon>
        <taxon>Campylobacterales</taxon>
        <taxon>Helicobacteraceae</taxon>
        <taxon>Helicobacter</taxon>
    </lineage>
</organism>
<protein>
    <recommendedName>
        <fullName evidence="1">3-phosphoshikimate 1-carboxyvinyltransferase</fullName>
        <ecNumber evidence="1">2.5.1.19</ecNumber>
    </recommendedName>
    <alternativeName>
        <fullName evidence="1">5-enolpyruvylshikimate-3-phosphate synthase</fullName>
        <shortName evidence="1">EPSP synthase</shortName>
        <shortName evidence="1">EPSPS</shortName>
    </alternativeName>
</protein>
<feature type="chain" id="PRO_0000088261" description="3-phosphoshikimate 1-carboxyvinyltransferase">
    <location>
        <begin position="1"/>
        <end position="429"/>
    </location>
</feature>
<feature type="active site" description="Proton acceptor" evidence="1">
    <location>
        <position position="302"/>
    </location>
</feature>
<feature type="binding site" evidence="1">
    <location>
        <position position="11"/>
    </location>
    <ligand>
        <name>3-phosphoshikimate</name>
        <dbReference type="ChEBI" id="CHEBI:145989"/>
    </ligand>
</feature>
<feature type="binding site" evidence="1">
    <location>
        <position position="11"/>
    </location>
    <ligand>
        <name>phosphoenolpyruvate</name>
        <dbReference type="ChEBI" id="CHEBI:58702"/>
    </ligand>
</feature>
<feature type="binding site" evidence="1">
    <location>
        <position position="12"/>
    </location>
    <ligand>
        <name>3-phosphoshikimate</name>
        <dbReference type="ChEBI" id="CHEBI:145989"/>
    </ligand>
</feature>
<feature type="binding site" evidence="1">
    <location>
        <position position="16"/>
    </location>
    <ligand>
        <name>3-phosphoshikimate</name>
        <dbReference type="ChEBI" id="CHEBI:145989"/>
    </ligand>
</feature>
<feature type="binding site" evidence="1">
    <location>
        <position position="82"/>
    </location>
    <ligand>
        <name>phosphoenolpyruvate</name>
        <dbReference type="ChEBI" id="CHEBI:58702"/>
    </ligand>
</feature>
<feature type="binding site" evidence="1">
    <location>
        <position position="110"/>
    </location>
    <ligand>
        <name>phosphoenolpyruvate</name>
        <dbReference type="ChEBI" id="CHEBI:58702"/>
    </ligand>
</feature>
<feature type="binding site" evidence="1">
    <location>
        <position position="155"/>
    </location>
    <ligand>
        <name>3-phosphoshikimate</name>
        <dbReference type="ChEBI" id="CHEBI:145989"/>
    </ligand>
</feature>
<feature type="binding site" evidence="1">
    <location>
        <position position="157"/>
    </location>
    <ligand>
        <name>3-phosphoshikimate</name>
        <dbReference type="ChEBI" id="CHEBI:145989"/>
    </ligand>
</feature>
<feature type="binding site" evidence="1">
    <location>
        <position position="157"/>
    </location>
    <ligand>
        <name>phosphoenolpyruvate</name>
        <dbReference type="ChEBI" id="CHEBI:58702"/>
    </ligand>
</feature>
<feature type="binding site" evidence="1">
    <location>
        <position position="302"/>
    </location>
    <ligand>
        <name>3-phosphoshikimate</name>
        <dbReference type="ChEBI" id="CHEBI:145989"/>
    </ligand>
</feature>
<feature type="binding site" evidence="1">
    <location>
        <position position="329"/>
    </location>
    <ligand>
        <name>3-phosphoshikimate</name>
        <dbReference type="ChEBI" id="CHEBI:145989"/>
    </ligand>
</feature>
<feature type="binding site" evidence="1">
    <location>
        <position position="333"/>
    </location>
    <ligand>
        <name>phosphoenolpyruvate</name>
        <dbReference type="ChEBI" id="CHEBI:58702"/>
    </ligand>
</feature>
<feature type="binding site" evidence="1">
    <location>
        <position position="385"/>
    </location>
    <ligand>
        <name>phosphoenolpyruvate</name>
        <dbReference type="ChEBI" id="CHEBI:58702"/>
    </ligand>
</feature>
<dbReference type="EC" id="2.5.1.19" evidence="1"/>
<dbReference type="EMBL" id="AE001439">
    <property type="protein sequence ID" value="AAD06557.1"/>
    <property type="molecule type" value="Genomic_DNA"/>
</dbReference>
<dbReference type="PIR" id="G71863">
    <property type="entry name" value="G71863"/>
</dbReference>
<dbReference type="RefSeq" id="WP_000570919.1">
    <property type="nucleotide sequence ID" value="NC_000921.1"/>
</dbReference>
<dbReference type="SMR" id="Q9ZKF7"/>
<dbReference type="KEGG" id="hpj:jhp_0980"/>
<dbReference type="eggNOG" id="COG0128">
    <property type="taxonomic scope" value="Bacteria"/>
</dbReference>
<dbReference type="UniPathway" id="UPA00053">
    <property type="reaction ID" value="UER00089"/>
</dbReference>
<dbReference type="Proteomes" id="UP000000804">
    <property type="component" value="Chromosome"/>
</dbReference>
<dbReference type="GO" id="GO:0005737">
    <property type="term" value="C:cytoplasm"/>
    <property type="evidence" value="ECO:0007669"/>
    <property type="project" value="UniProtKB-SubCell"/>
</dbReference>
<dbReference type="GO" id="GO:0003866">
    <property type="term" value="F:3-phosphoshikimate 1-carboxyvinyltransferase activity"/>
    <property type="evidence" value="ECO:0007669"/>
    <property type="project" value="UniProtKB-UniRule"/>
</dbReference>
<dbReference type="GO" id="GO:0008652">
    <property type="term" value="P:amino acid biosynthetic process"/>
    <property type="evidence" value="ECO:0007669"/>
    <property type="project" value="UniProtKB-KW"/>
</dbReference>
<dbReference type="GO" id="GO:0009073">
    <property type="term" value="P:aromatic amino acid family biosynthetic process"/>
    <property type="evidence" value="ECO:0007669"/>
    <property type="project" value="UniProtKB-KW"/>
</dbReference>
<dbReference type="GO" id="GO:0009423">
    <property type="term" value="P:chorismate biosynthetic process"/>
    <property type="evidence" value="ECO:0007669"/>
    <property type="project" value="UniProtKB-UniRule"/>
</dbReference>
<dbReference type="CDD" id="cd01556">
    <property type="entry name" value="EPSP_synthase"/>
    <property type="match status" value="1"/>
</dbReference>
<dbReference type="FunFam" id="3.65.10.10:FF:000005">
    <property type="entry name" value="3-phosphoshikimate 1-carboxyvinyltransferase"/>
    <property type="match status" value="1"/>
</dbReference>
<dbReference type="Gene3D" id="3.65.10.10">
    <property type="entry name" value="Enolpyruvate transferase domain"/>
    <property type="match status" value="2"/>
</dbReference>
<dbReference type="HAMAP" id="MF_00210">
    <property type="entry name" value="EPSP_synth"/>
    <property type="match status" value="1"/>
</dbReference>
<dbReference type="InterPro" id="IPR001986">
    <property type="entry name" value="Enolpyruvate_Tfrase_dom"/>
</dbReference>
<dbReference type="InterPro" id="IPR036968">
    <property type="entry name" value="Enolpyruvate_Tfrase_sf"/>
</dbReference>
<dbReference type="InterPro" id="IPR006264">
    <property type="entry name" value="EPSP_synthase"/>
</dbReference>
<dbReference type="InterPro" id="IPR023193">
    <property type="entry name" value="EPSP_synthase_CS"/>
</dbReference>
<dbReference type="InterPro" id="IPR013792">
    <property type="entry name" value="RNA3'P_cycl/enolpyr_Trfase_a/b"/>
</dbReference>
<dbReference type="NCBIfam" id="TIGR01356">
    <property type="entry name" value="aroA"/>
    <property type="match status" value="1"/>
</dbReference>
<dbReference type="PANTHER" id="PTHR21090">
    <property type="entry name" value="AROM/DEHYDROQUINATE SYNTHASE"/>
    <property type="match status" value="1"/>
</dbReference>
<dbReference type="PANTHER" id="PTHR21090:SF5">
    <property type="entry name" value="PENTAFUNCTIONAL AROM POLYPEPTIDE"/>
    <property type="match status" value="1"/>
</dbReference>
<dbReference type="Pfam" id="PF00275">
    <property type="entry name" value="EPSP_synthase"/>
    <property type="match status" value="1"/>
</dbReference>
<dbReference type="PIRSF" id="PIRSF000505">
    <property type="entry name" value="EPSPS"/>
    <property type="match status" value="1"/>
</dbReference>
<dbReference type="SUPFAM" id="SSF55205">
    <property type="entry name" value="EPT/RTPC-like"/>
    <property type="match status" value="1"/>
</dbReference>
<dbReference type="PROSITE" id="PS00104">
    <property type="entry name" value="EPSP_SYNTHASE_1"/>
    <property type="match status" value="1"/>
</dbReference>
<dbReference type="PROSITE" id="PS00885">
    <property type="entry name" value="EPSP_SYNTHASE_2"/>
    <property type="match status" value="1"/>
</dbReference>
<accession>Q9ZKF7</accession>
<comment type="function">
    <text evidence="1">Catalyzes the transfer of the enolpyruvyl moiety of phosphoenolpyruvate (PEP) to the 5-hydroxyl of shikimate-3-phosphate (S3P) to produce enolpyruvyl shikimate-3-phosphate and inorganic phosphate.</text>
</comment>
<comment type="catalytic activity">
    <reaction evidence="1">
        <text>3-phosphoshikimate + phosphoenolpyruvate = 5-O-(1-carboxyvinyl)-3-phosphoshikimate + phosphate</text>
        <dbReference type="Rhea" id="RHEA:21256"/>
        <dbReference type="ChEBI" id="CHEBI:43474"/>
        <dbReference type="ChEBI" id="CHEBI:57701"/>
        <dbReference type="ChEBI" id="CHEBI:58702"/>
        <dbReference type="ChEBI" id="CHEBI:145989"/>
        <dbReference type="EC" id="2.5.1.19"/>
    </reaction>
    <physiologicalReaction direction="left-to-right" evidence="1">
        <dbReference type="Rhea" id="RHEA:21257"/>
    </physiologicalReaction>
</comment>
<comment type="pathway">
    <text evidence="1">Metabolic intermediate biosynthesis; chorismate biosynthesis; chorismate from D-erythrose 4-phosphate and phosphoenolpyruvate: step 6/7.</text>
</comment>
<comment type="subunit">
    <text evidence="1">Monomer.</text>
</comment>
<comment type="subcellular location">
    <subcellularLocation>
        <location evidence="1">Cytoplasm</location>
    </subcellularLocation>
</comment>
<comment type="similarity">
    <text evidence="1 2">Belongs to the EPSP synthase family.</text>
</comment>
<evidence type="ECO:0000255" key="1">
    <source>
        <dbReference type="HAMAP-Rule" id="MF_00210"/>
    </source>
</evidence>
<evidence type="ECO:0000305" key="2"/>
<keyword id="KW-0028">Amino-acid biosynthesis</keyword>
<keyword id="KW-0057">Aromatic amino acid biosynthesis</keyword>
<keyword id="KW-0963">Cytoplasm</keyword>
<keyword id="KW-0808">Transferase</keyword>